<name>ISPT_CLOPE</name>
<protein>
    <recommendedName>
        <fullName evidence="1">Isoprenyl transferase</fullName>
        <ecNumber evidence="1">2.5.1.-</ecNumber>
    </recommendedName>
</protein>
<comment type="function">
    <text evidence="1">Catalyzes the condensation of isopentenyl diphosphate (IPP) with allylic pyrophosphates generating different type of terpenoids.</text>
</comment>
<comment type="cofactor">
    <cofactor evidence="1">
        <name>Mg(2+)</name>
        <dbReference type="ChEBI" id="CHEBI:18420"/>
    </cofactor>
    <text evidence="1">Binds 2 magnesium ions per subunit.</text>
</comment>
<comment type="subunit">
    <text evidence="1">Homodimer.</text>
</comment>
<comment type="similarity">
    <text evidence="1">Belongs to the UPP synthase family.</text>
</comment>
<gene>
    <name evidence="1" type="primary">uppS</name>
    <name type="ordered locus">CPE1696</name>
</gene>
<proteinExistence type="inferred from homology"/>
<accession>Q8XJQ9</accession>
<sequence length="253" mass="29259">MLDFFSKKGNEDSEEIVLIEDKMPKHIAIIMDGNGRWAKKRGLPRTMGHRAGVKTIKTIVKECDKLGVKYLTLYAFSTENWKRPEDEVNALMKLVVEFIKNEIDELHQNGVRVQTIGDLSRFPEEPKKAILWAMEKTKDNTGVVLSLALNYGGRNEIVRGIKSVIEDVKAGKISIDDINEDMFNDYLYTKGMPDPDLIIRPSGEQRLSNFLLWQCAYSEFWYSQINWPDFNGEDLRKAIFDYQNRDRRFGGIK</sequence>
<organism>
    <name type="scientific">Clostridium perfringens (strain 13 / Type A)</name>
    <dbReference type="NCBI Taxonomy" id="195102"/>
    <lineage>
        <taxon>Bacteria</taxon>
        <taxon>Bacillati</taxon>
        <taxon>Bacillota</taxon>
        <taxon>Clostridia</taxon>
        <taxon>Eubacteriales</taxon>
        <taxon>Clostridiaceae</taxon>
        <taxon>Clostridium</taxon>
    </lineage>
</organism>
<evidence type="ECO:0000255" key="1">
    <source>
        <dbReference type="HAMAP-Rule" id="MF_01139"/>
    </source>
</evidence>
<dbReference type="EC" id="2.5.1.-" evidence="1"/>
<dbReference type="EMBL" id="BA000016">
    <property type="protein sequence ID" value="BAB81402.1"/>
    <property type="molecule type" value="Genomic_DNA"/>
</dbReference>
<dbReference type="RefSeq" id="WP_003459793.1">
    <property type="nucleotide sequence ID" value="NC_003366.1"/>
</dbReference>
<dbReference type="SMR" id="Q8XJQ9"/>
<dbReference type="STRING" id="195102.gene:10490960"/>
<dbReference type="KEGG" id="cpe:CPE1696"/>
<dbReference type="HOGENOM" id="CLU_038505_1_1_9"/>
<dbReference type="Proteomes" id="UP000000818">
    <property type="component" value="Chromosome"/>
</dbReference>
<dbReference type="GO" id="GO:0005829">
    <property type="term" value="C:cytosol"/>
    <property type="evidence" value="ECO:0007669"/>
    <property type="project" value="TreeGrafter"/>
</dbReference>
<dbReference type="GO" id="GO:0008834">
    <property type="term" value="F:ditrans,polycis-undecaprenyl-diphosphate synthase [(2E,6E)-farnesyl-diphosphate specific] activity"/>
    <property type="evidence" value="ECO:0007669"/>
    <property type="project" value="TreeGrafter"/>
</dbReference>
<dbReference type="GO" id="GO:0000287">
    <property type="term" value="F:magnesium ion binding"/>
    <property type="evidence" value="ECO:0007669"/>
    <property type="project" value="UniProtKB-UniRule"/>
</dbReference>
<dbReference type="GO" id="GO:0030145">
    <property type="term" value="F:manganese ion binding"/>
    <property type="evidence" value="ECO:0007669"/>
    <property type="project" value="TreeGrafter"/>
</dbReference>
<dbReference type="GO" id="GO:0016094">
    <property type="term" value="P:polyprenol biosynthetic process"/>
    <property type="evidence" value="ECO:0007669"/>
    <property type="project" value="TreeGrafter"/>
</dbReference>
<dbReference type="CDD" id="cd00475">
    <property type="entry name" value="Cis_IPPS"/>
    <property type="match status" value="1"/>
</dbReference>
<dbReference type="FunFam" id="3.40.1180.10:FF:000001">
    <property type="entry name" value="(2E,6E)-farnesyl-diphosphate-specific ditrans,polycis-undecaprenyl-diphosphate synthase"/>
    <property type="match status" value="1"/>
</dbReference>
<dbReference type="Gene3D" id="3.40.1180.10">
    <property type="entry name" value="Decaprenyl diphosphate synthase-like"/>
    <property type="match status" value="1"/>
</dbReference>
<dbReference type="HAMAP" id="MF_01139">
    <property type="entry name" value="ISPT"/>
    <property type="match status" value="1"/>
</dbReference>
<dbReference type="InterPro" id="IPR001441">
    <property type="entry name" value="UPP_synth-like"/>
</dbReference>
<dbReference type="InterPro" id="IPR018520">
    <property type="entry name" value="UPP_synth-like_CS"/>
</dbReference>
<dbReference type="InterPro" id="IPR036424">
    <property type="entry name" value="UPP_synth-like_sf"/>
</dbReference>
<dbReference type="NCBIfam" id="NF011405">
    <property type="entry name" value="PRK14830.1"/>
    <property type="match status" value="1"/>
</dbReference>
<dbReference type="NCBIfam" id="TIGR00055">
    <property type="entry name" value="uppS"/>
    <property type="match status" value="1"/>
</dbReference>
<dbReference type="PANTHER" id="PTHR10291:SF0">
    <property type="entry name" value="DEHYDRODOLICHYL DIPHOSPHATE SYNTHASE 2"/>
    <property type="match status" value="1"/>
</dbReference>
<dbReference type="PANTHER" id="PTHR10291">
    <property type="entry name" value="DEHYDRODOLICHYL DIPHOSPHATE SYNTHASE FAMILY MEMBER"/>
    <property type="match status" value="1"/>
</dbReference>
<dbReference type="Pfam" id="PF01255">
    <property type="entry name" value="Prenyltransf"/>
    <property type="match status" value="1"/>
</dbReference>
<dbReference type="SUPFAM" id="SSF64005">
    <property type="entry name" value="Undecaprenyl diphosphate synthase"/>
    <property type="match status" value="1"/>
</dbReference>
<dbReference type="PROSITE" id="PS01066">
    <property type="entry name" value="UPP_SYNTHASE"/>
    <property type="match status" value="1"/>
</dbReference>
<reference key="1">
    <citation type="journal article" date="2002" name="Proc. Natl. Acad. Sci. U.S.A.">
        <title>Complete genome sequence of Clostridium perfringens, an anaerobic flesh-eater.</title>
        <authorList>
            <person name="Shimizu T."/>
            <person name="Ohtani K."/>
            <person name="Hirakawa H."/>
            <person name="Ohshima K."/>
            <person name="Yamashita A."/>
            <person name="Shiba T."/>
            <person name="Ogasawara N."/>
            <person name="Hattori M."/>
            <person name="Kuhara S."/>
            <person name="Hayashi H."/>
        </authorList>
    </citation>
    <scope>NUCLEOTIDE SEQUENCE [LARGE SCALE GENOMIC DNA]</scope>
    <source>
        <strain>13 / Type A</strain>
    </source>
</reference>
<keyword id="KW-0460">Magnesium</keyword>
<keyword id="KW-0479">Metal-binding</keyword>
<keyword id="KW-1185">Reference proteome</keyword>
<keyword id="KW-0808">Transferase</keyword>
<feature type="chain" id="PRO_0000123599" description="Isoprenyl transferase">
    <location>
        <begin position="1"/>
        <end position="253"/>
    </location>
</feature>
<feature type="active site" evidence="1">
    <location>
        <position position="32"/>
    </location>
</feature>
<feature type="active site" description="Proton acceptor" evidence="1">
    <location>
        <position position="80"/>
    </location>
</feature>
<feature type="binding site" evidence="1">
    <location>
        <position position="32"/>
    </location>
    <ligand>
        <name>Mg(2+)</name>
        <dbReference type="ChEBI" id="CHEBI:18420"/>
    </ligand>
</feature>
<feature type="binding site" evidence="1">
    <location>
        <begin position="33"/>
        <end position="36"/>
    </location>
    <ligand>
        <name>substrate</name>
    </ligand>
</feature>
<feature type="binding site" evidence="1">
    <location>
        <position position="37"/>
    </location>
    <ligand>
        <name>substrate</name>
    </ligand>
</feature>
<feature type="binding site" evidence="1">
    <location>
        <position position="45"/>
    </location>
    <ligand>
        <name>substrate</name>
    </ligand>
</feature>
<feature type="binding site" evidence="1">
    <location>
        <position position="49"/>
    </location>
    <ligand>
        <name>substrate</name>
    </ligand>
</feature>
<feature type="binding site" evidence="1">
    <location>
        <begin position="77"/>
        <end position="79"/>
    </location>
    <ligand>
        <name>substrate</name>
    </ligand>
</feature>
<feature type="binding site" evidence="1">
    <location>
        <position position="81"/>
    </location>
    <ligand>
        <name>substrate</name>
    </ligand>
</feature>
<feature type="binding site" evidence="1">
    <location>
        <position position="83"/>
    </location>
    <ligand>
        <name>substrate</name>
    </ligand>
</feature>
<feature type="binding site" evidence="1">
    <location>
        <position position="200"/>
    </location>
    <ligand>
        <name>substrate</name>
    </ligand>
</feature>
<feature type="binding site" evidence="1">
    <location>
        <begin position="206"/>
        <end position="208"/>
    </location>
    <ligand>
        <name>substrate</name>
    </ligand>
</feature>
<feature type="binding site" evidence="1">
    <location>
        <position position="219"/>
    </location>
    <ligand>
        <name>Mg(2+)</name>
        <dbReference type="ChEBI" id="CHEBI:18420"/>
    </ligand>
</feature>